<comment type="function">
    <text evidence="2">Key calcium ion sensor involved in the Ca(2+)-triggered synaptic vesicle-plasma membrane fusion and in the control of neurotransmitter release at these output synapses.</text>
</comment>
<comment type="cofactor">
    <cofactor evidence="4">
        <name>Ca(2+)</name>
        <dbReference type="ChEBI" id="CHEBI:29108"/>
    </cofactor>
</comment>
<comment type="subcellular location">
    <subcellularLocation>
        <location evidence="2">Cytoplasmic vesicle</location>
        <location evidence="2">Secretory vesicle</location>
        <location evidence="2">Synaptic vesicle membrane</location>
        <topology evidence="2">Single-pass type II membrane protein</topology>
    </subcellularLocation>
    <subcellularLocation>
        <location evidence="2">Basolateral cell membrane</location>
        <topology evidence="2">Single-pass type II membrane protein</topology>
    </subcellularLocation>
    <subcellularLocation>
        <location evidence="2">Endoplasmic reticulum membrane</location>
        <topology evidence="2">Single-pass type II membrane protein</topology>
    </subcellularLocation>
    <subcellularLocation>
        <location evidence="2">Golgi apparatus membrane</location>
        <topology evidence="2">Single-pass type II membrane protein</topology>
    </subcellularLocation>
    <subcellularLocation>
        <location evidence="2">Presynaptic cell membrane</location>
        <topology evidence="2">Single-pass type II membrane protein</topology>
    </subcellularLocation>
    <subcellularLocation>
        <location evidence="2">Cell membrane</location>
        <topology evidence="2">Single-pass type II membrane protein</topology>
    </subcellularLocation>
    <text evidence="2">Detected at basolateral cell membrane with synaptic vesicles surrounding the ribbon and at the presynaptic plasma membrane in the inner hair cells (IHCs) at postnatal day 30 (P30). Colocalizes with GPR25 and RAB8B in inner hair cells.</text>
</comment>
<comment type="domain">
    <text evidence="1">The N-terminal first 124 residues can be classified as C2 domain, based on their 3D-structure. They are not sufficient for calcium ion or phospholipid binding (By similarity).</text>
</comment>
<comment type="similarity">
    <text evidence="6">Belongs to the ferlin family.</text>
</comment>
<protein>
    <recommendedName>
        <fullName>Otoferlin</fullName>
    </recommendedName>
    <alternativeName>
        <fullName>Fer-1-like protein 2</fullName>
    </alternativeName>
</protein>
<proteinExistence type="inferred from homology"/>
<name>OTOF_DANRE</name>
<keyword id="KW-0106">Calcium</keyword>
<keyword id="KW-1003">Cell membrane</keyword>
<keyword id="KW-0966">Cell projection</keyword>
<keyword id="KW-0175">Coiled coil</keyword>
<keyword id="KW-0968">Cytoplasmic vesicle</keyword>
<keyword id="KW-0256">Endoplasmic reticulum</keyword>
<keyword id="KW-0333">Golgi apparatus</keyword>
<keyword id="KW-0472">Membrane</keyword>
<keyword id="KW-0479">Metal-binding</keyword>
<keyword id="KW-1185">Reference proteome</keyword>
<keyword id="KW-0677">Repeat</keyword>
<keyword id="KW-0735">Signal-anchor</keyword>
<keyword id="KW-0770">Synapse</keyword>
<keyword id="KW-0812">Transmembrane</keyword>
<keyword id="KW-1133">Transmembrane helix</keyword>
<organism>
    <name type="scientific">Danio rerio</name>
    <name type="common">Zebrafish</name>
    <name type="synonym">Brachydanio rerio</name>
    <dbReference type="NCBI Taxonomy" id="7955"/>
    <lineage>
        <taxon>Eukaryota</taxon>
        <taxon>Metazoa</taxon>
        <taxon>Chordata</taxon>
        <taxon>Craniata</taxon>
        <taxon>Vertebrata</taxon>
        <taxon>Euteleostomi</taxon>
        <taxon>Actinopterygii</taxon>
        <taxon>Neopterygii</taxon>
        <taxon>Teleostei</taxon>
        <taxon>Ostariophysi</taxon>
        <taxon>Cypriniformes</taxon>
        <taxon>Danionidae</taxon>
        <taxon>Danioninae</taxon>
        <taxon>Danio</taxon>
    </lineage>
</organism>
<dbReference type="EMBL" id="AL929014">
    <property type="protein sequence ID" value="CAI11718.1"/>
    <property type="molecule type" value="Genomic_DNA"/>
</dbReference>
<dbReference type="EMBL" id="BX000361">
    <property type="protein sequence ID" value="CAI11718.1"/>
    <property type="status" value="JOINED"/>
    <property type="molecule type" value="Genomic_DNA"/>
</dbReference>
<dbReference type="EMBL" id="BX000361">
    <property type="protein sequence ID" value="CAI20764.1"/>
    <property type="molecule type" value="Genomic_DNA"/>
</dbReference>
<dbReference type="EMBL" id="AL929014">
    <property type="protein sequence ID" value="CAI20764.1"/>
    <property type="status" value="JOINED"/>
    <property type="molecule type" value="Genomic_DNA"/>
</dbReference>
<dbReference type="RefSeq" id="NP_001025283.1">
    <property type="nucleotide sequence ID" value="NM_001030112.2"/>
</dbReference>
<dbReference type="SMR" id="Q5SPC5"/>
<dbReference type="FunCoup" id="Q5SPC5">
    <property type="interactions" value="1035"/>
</dbReference>
<dbReference type="STRING" id="7955.ENSDARP00000118166"/>
<dbReference type="PaxDb" id="7955-ENSDARP00000118166"/>
<dbReference type="Ensembl" id="ENSDART00000008840">
    <property type="protein sequence ID" value="ENSDARP00000007932"/>
    <property type="gene ID" value="ENSDARG00000030832"/>
</dbReference>
<dbReference type="GeneID" id="557476"/>
<dbReference type="KEGG" id="dre:557476"/>
<dbReference type="AGR" id="ZFIN:ZDB-GENE-030131-7778"/>
<dbReference type="CTD" id="557476"/>
<dbReference type="ZFIN" id="ZDB-GENE-030131-7778">
    <property type="gene designation" value="otofa"/>
</dbReference>
<dbReference type="eggNOG" id="KOG1326">
    <property type="taxonomic scope" value="Eukaryota"/>
</dbReference>
<dbReference type="HOGENOM" id="CLU_001183_3_1_1"/>
<dbReference type="InParanoid" id="Q5SPC5"/>
<dbReference type="OMA" id="WANIYGA"/>
<dbReference type="OrthoDB" id="270970at2759"/>
<dbReference type="PhylomeDB" id="Q5SPC5"/>
<dbReference type="TreeFam" id="TF316871"/>
<dbReference type="PRO" id="PR:Q5SPC5"/>
<dbReference type="Proteomes" id="UP000000437">
    <property type="component" value="Chromosome 20"/>
</dbReference>
<dbReference type="Bgee" id="ENSDARG00000030832">
    <property type="expression patterns" value="Expressed in brain and 25 other cell types or tissues"/>
</dbReference>
<dbReference type="ExpressionAtlas" id="Q5SPC5">
    <property type="expression patterns" value="baseline and differential"/>
</dbReference>
<dbReference type="GO" id="GO:0016323">
    <property type="term" value="C:basolateral plasma membrane"/>
    <property type="evidence" value="ECO:0007669"/>
    <property type="project" value="UniProtKB-SubCell"/>
</dbReference>
<dbReference type="GO" id="GO:0042995">
    <property type="term" value="C:cell projection"/>
    <property type="evidence" value="ECO:0007669"/>
    <property type="project" value="UniProtKB-KW"/>
</dbReference>
<dbReference type="GO" id="GO:0005789">
    <property type="term" value="C:endoplasmic reticulum membrane"/>
    <property type="evidence" value="ECO:0007669"/>
    <property type="project" value="UniProtKB-SubCell"/>
</dbReference>
<dbReference type="GO" id="GO:0000139">
    <property type="term" value="C:Golgi membrane"/>
    <property type="evidence" value="ECO:0007669"/>
    <property type="project" value="UniProtKB-SubCell"/>
</dbReference>
<dbReference type="GO" id="GO:0048787">
    <property type="term" value="C:presynaptic active zone membrane"/>
    <property type="evidence" value="ECO:0000318"/>
    <property type="project" value="GO_Central"/>
</dbReference>
<dbReference type="GO" id="GO:0030672">
    <property type="term" value="C:synaptic vesicle membrane"/>
    <property type="evidence" value="ECO:0000250"/>
    <property type="project" value="UniProtKB"/>
</dbReference>
<dbReference type="GO" id="GO:0035612">
    <property type="term" value="F:AP-2 adaptor complex binding"/>
    <property type="evidence" value="ECO:0000318"/>
    <property type="project" value="GO_Central"/>
</dbReference>
<dbReference type="GO" id="GO:0005509">
    <property type="term" value="F:calcium ion binding"/>
    <property type="evidence" value="ECO:0000250"/>
    <property type="project" value="UniProtKB"/>
</dbReference>
<dbReference type="GO" id="GO:0050885">
    <property type="term" value="P:neuromuscular process controlling balance"/>
    <property type="evidence" value="ECO:0000316"/>
    <property type="project" value="ZFIN"/>
</dbReference>
<dbReference type="GO" id="GO:0007009">
    <property type="term" value="P:plasma membrane organization"/>
    <property type="evidence" value="ECO:0000318"/>
    <property type="project" value="GO_Central"/>
</dbReference>
<dbReference type="GO" id="GO:0010996">
    <property type="term" value="P:response to auditory stimulus"/>
    <property type="evidence" value="ECO:0000316"/>
    <property type="project" value="ZFIN"/>
</dbReference>
<dbReference type="GO" id="GO:0007605">
    <property type="term" value="P:sensory perception of sound"/>
    <property type="evidence" value="ECO:0000314"/>
    <property type="project" value="MGI"/>
</dbReference>
<dbReference type="GO" id="GO:0001964">
    <property type="term" value="P:startle response"/>
    <property type="evidence" value="ECO:0000314"/>
    <property type="project" value="MGI"/>
</dbReference>
<dbReference type="GO" id="GO:0016079">
    <property type="term" value="P:synaptic vesicle exocytosis"/>
    <property type="evidence" value="ECO:0000250"/>
    <property type="project" value="UniProtKB"/>
</dbReference>
<dbReference type="GO" id="GO:0016082">
    <property type="term" value="P:synaptic vesicle priming"/>
    <property type="evidence" value="ECO:0000318"/>
    <property type="project" value="GO_Central"/>
</dbReference>
<dbReference type="GO" id="GO:0036465">
    <property type="term" value="P:synaptic vesicle recycling"/>
    <property type="evidence" value="ECO:0000316"/>
    <property type="project" value="ZFIN"/>
</dbReference>
<dbReference type="CDD" id="cd08373">
    <property type="entry name" value="C2A_Ferlin"/>
    <property type="match status" value="1"/>
</dbReference>
<dbReference type="CDD" id="cd04011">
    <property type="entry name" value="C2B_Ferlin"/>
    <property type="match status" value="1"/>
</dbReference>
<dbReference type="CDD" id="cd04018">
    <property type="entry name" value="C2C_Ferlin"/>
    <property type="match status" value="1"/>
</dbReference>
<dbReference type="CDD" id="cd04017">
    <property type="entry name" value="C2D_Ferlin"/>
    <property type="match status" value="1"/>
</dbReference>
<dbReference type="CDD" id="cd04037">
    <property type="entry name" value="C2E_Ferlin"/>
    <property type="match status" value="1"/>
</dbReference>
<dbReference type="CDD" id="cd08374">
    <property type="entry name" value="C2F_Ferlin"/>
    <property type="match status" value="1"/>
</dbReference>
<dbReference type="FunFam" id="2.60.40.150:FF:000009">
    <property type="entry name" value="dysferlin isoform X2"/>
    <property type="match status" value="1"/>
</dbReference>
<dbReference type="FunFam" id="2.60.40.150:FF:000081">
    <property type="entry name" value="otoferlin isoform X1"/>
    <property type="match status" value="1"/>
</dbReference>
<dbReference type="FunFam" id="2.60.40.150:FF:000089">
    <property type="entry name" value="otoferlin isoform X1"/>
    <property type="match status" value="1"/>
</dbReference>
<dbReference type="FunFam" id="2.60.40.150:FF:000034">
    <property type="entry name" value="otoferlin isoform X2"/>
    <property type="match status" value="1"/>
</dbReference>
<dbReference type="FunFam" id="2.60.40.150:FF:000054">
    <property type="entry name" value="otoferlin isoform X2"/>
    <property type="match status" value="1"/>
</dbReference>
<dbReference type="Gene3D" id="2.60.40.150">
    <property type="entry name" value="C2 domain"/>
    <property type="match status" value="6"/>
</dbReference>
<dbReference type="InterPro" id="IPR000008">
    <property type="entry name" value="C2_dom"/>
</dbReference>
<dbReference type="InterPro" id="IPR035892">
    <property type="entry name" value="C2_domain_sf"/>
</dbReference>
<dbReference type="InterPro" id="IPR037726">
    <property type="entry name" value="C2A_Ferlin"/>
</dbReference>
<dbReference type="InterPro" id="IPR037720">
    <property type="entry name" value="C2B_Ferlin"/>
</dbReference>
<dbReference type="InterPro" id="IPR037722">
    <property type="entry name" value="C2C_Ferlin"/>
</dbReference>
<dbReference type="InterPro" id="IPR037723">
    <property type="entry name" value="C2D_Ferlin"/>
</dbReference>
<dbReference type="InterPro" id="IPR037724">
    <property type="entry name" value="C2E_Ferlin"/>
</dbReference>
<dbReference type="InterPro" id="IPR037725">
    <property type="entry name" value="C2F_Ferlin"/>
</dbReference>
<dbReference type="InterPro" id="IPR012968">
    <property type="entry name" value="FerIin_dom"/>
</dbReference>
<dbReference type="InterPro" id="IPR037721">
    <property type="entry name" value="Ferlin"/>
</dbReference>
<dbReference type="InterPro" id="IPR012561">
    <property type="entry name" value="Ferlin_B-domain"/>
</dbReference>
<dbReference type="InterPro" id="IPR032362">
    <property type="entry name" value="Ferlin_C"/>
</dbReference>
<dbReference type="InterPro" id="IPR055072">
    <property type="entry name" value="Ferlin_DSRM"/>
</dbReference>
<dbReference type="PANTHER" id="PTHR12546">
    <property type="entry name" value="FER-1-LIKE"/>
    <property type="match status" value="1"/>
</dbReference>
<dbReference type="PANTHER" id="PTHR12546:SF32">
    <property type="entry name" value="OTOFERLIN"/>
    <property type="match status" value="1"/>
</dbReference>
<dbReference type="Pfam" id="PF00168">
    <property type="entry name" value="C2"/>
    <property type="match status" value="6"/>
</dbReference>
<dbReference type="Pfam" id="PF22901">
    <property type="entry name" value="dsrm_Ferlin"/>
    <property type="match status" value="1"/>
</dbReference>
<dbReference type="Pfam" id="PF08150">
    <property type="entry name" value="FerB"/>
    <property type="match status" value="1"/>
</dbReference>
<dbReference type="Pfam" id="PF08151">
    <property type="entry name" value="FerI"/>
    <property type="match status" value="1"/>
</dbReference>
<dbReference type="Pfam" id="PF16165">
    <property type="entry name" value="Ferlin_C"/>
    <property type="match status" value="1"/>
</dbReference>
<dbReference type="SMART" id="SM00239">
    <property type="entry name" value="C2"/>
    <property type="match status" value="6"/>
</dbReference>
<dbReference type="SMART" id="SM01201">
    <property type="entry name" value="FerB"/>
    <property type="match status" value="1"/>
</dbReference>
<dbReference type="SMART" id="SM01202">
    <property type="entry name" value="FerI"/>
    <property type="match status" value="1"/>
</dbReference>
<dbReference type="SUPFAM" id="SSF49562">
    <property type="entry name" value="C2 domain (Calcium/lipid-binding domain, CaLB)"/>
    <property type="match status" value="7"/>
</dbReference>
<dbReference type="PROSITE" id="PS50004">
    <property type="entry name" value="C2"/>
    <property type="match status" value="7"/>
</dbReference>
<accession>Q5SPC5</accession>
<sequence>MALVVHLKTVTELRGKGDRIAKVTFRGLSFFSRVLENCEDEARFEQAFRWPIGSQVDGDEMLEIQVFNYSKVFTNRLIGTFRMVLQKVVEEGHLEVSDTLIDDNNTAIQTTISIEIKYQTMDGSVKVWSDGEFLDIPDDLDGTFQFETDSLLSGRSQSSGTSPGRSIHGIPTFRKAGKGVFSAMKLGKTRTSKDDHKKGDDAAILDAEDLDRKAMRLGGILDPDTISLASVTAVTTNVSNKRSKPDIKMEPSSGRPVDYQISVTVIEARQLVGLNMDPVVCVEIGEEKKYTSMKESTNCPYYNEYFVFDFHVPPDVMFDKIIKISVIHSKNLLRSGTLVGTFKLDVGTVYTQPEHQFHHKWAMLSDPDDITTGCKGYVKCDIAVVGKGDNIKTPHKASEADEDDIEGNLLLPEGVPSERQWARFYVKIYRAEGLPKMNTSIMANVKKAFIGENRDLVDPYVLVQFAGQKGKTSVQKSSYEPIWNEQVIFTEMFPPLCRRLKVQIRDSDKVNDVAIGTHFIDLRKVSNDGDKGFLPTMGPAWVNMYGSTRNYTLMDEHQDLNEGLGEGVSFRARLLISIAVEILDTTSAEIMSSTEVHMEPVSNISESATGKMEEFFLFGSFLEATMIDRKIGDKPISFEVTIGNYGNQIDGVSKPALAKKKKEGGGESEEEESELIHNSSEEEAEDDGDLTSVPSTPPMKPVITDRNYFHLPYFEKKPCIYIKSWWQDQRRRLYNSNIMDKIADKLEEGLNDVQEIIKTEKAYPERRLRGVLEELSTSCSRFVTLANKDQNLSGRTKLDRERLKSCMREMESMGQQAKTIRTQVKRNTVRDKLKLVLNFLQRLRFLADEPQHSIPDVFIWMISNNKRIAYARIPSKDILYSIVDEEMGKDCGKVKAVFLRLPGKKGFGPAGWTVQAKLEMYLWLGLNKQRKDFLIGLPSGFEENKAVKGIGIQAVPPISLVYNMKQVFQLRAHMYQARSLFAADTSGLSDPFARVFFSTHSQVTEVLSETLCPTWDQLLVFDNVELYGEAGELRDDPPIIVIELYDQDTVGKAEFIGRTFAKPLTKMVDEHYGPPRFPPQLEYYQIYRGNCAAGDLLAAFELLQIGPAGRAALPPIDGPTDSDRGPILPVPLGIRPVLSRYRIEVLFWGLRDLKRVNLAQVDRPRVDIECAGKGVQSALIQNYKKNPNFSTLVKWFEVDLPENELLHPPLNIRVVDCRAFGRYILVGSHAVTTLRKFIYSPPDKTANNWAHTGDIVVNMSPEPNIKKMDTVVKIEATTDAVVKVDLNEDEKEKEKKKKKKKKGEEVEEEEPDESMLDWWSKYFASIETMMENLRAQEAAQAEAEEREDLEIAAESAEIKADDFPMKGTKPKEKSKDKKSTKDKKKNNDGTEKRPPKPKVDELMVYNKELESEFGSFEDWLHTFNLYRGKAGDDDDHNVVDEDRIVGRFKGSLCMYKLPLSEEITREAGFDPNMGMFQSIPHNDPINVLVRIYIIRATDLHPADINGKADPYIVIKLGKSDIRDKENYISKQLNPVFGKSFDIEATFPMESMLTVAVYDWDLVGTDDLIGETKIDLENRYYSKHRATCGIASNYSVHGYNVWRDPQKPAQILAKLCKEGKLDGPHYGPGGRVKVANRIFLGPTEIEDESGLKKQTEEHLALTVLRHWEEIPRVGCKLIPEHVETRPLLNPDKPGIEQGRIEMWVDMFPMDVPAPGPAIDISPRKPKRYELRVIIWNTDEVILEDDDYFTGEKSSDIFVRGWLKGQQEDKQDTDVHYHSLTGEGNFNWRFVFPFDYLMAEEKIVISKKESMFSWDETEYKIPARLTLQVWDADHFSADDFLGAIELDLNKFPRGAKTAKQCSLDMVLKEHELPTISIFKQKRVKGWWPFVAQNENDEFELTGKVEAELHLLTAEEAEKSPVGLGRNDPEPLEKPNRPDTSLMWFMNPLRSIRYFIWHNYRWLILKALALLLLLLLVGLFLYSIPGYLVKKLLGA</sequence>
<feature type="chain" id="PRO_0000355561" description="Otoferlin">
    <location>
        <begin position="1"/>
        <end position="1992"/>
    </location>
</feature>
<feature type="topological domain" description="Cytoplasmic" evidence="3">
    <location>
        <begin position="1"/>
        <end position="1958"/>
    </location>
</feature>
<feature type="transmembrane region" description="Helical" evidence="3">
    <location>
        <begin position="1959"/>
        <end position="1979"/>
    </location>
</feature>
<feature type="topological domain" description="Extracellular" evidence="3">
    <location>
        <begin position="1980"/>
        <end position="1992"/>
    </location>
</feature>
<feature type="domain" description="C2 1" evidence="4">
    <location>
        <begin position="1"/>
        <end position="98"/>
    </location>
</feature>
<feature type="domain" description="C2 2" evidence="4">
    <location>
        <begin position="241"/>
        <end position="362"/>
    </location>
</feature>
<feature type="domain" description="C2 3" evidence="4">
    <location>
        <begin position="405"/>
        <end position="536"/>
    </location>
</feature>
<feature type="domain" description="C2 4" evidence="4">
    <location>
        <begin position="952"/>
        <end position="1077"/>
    </location>
</feature>
<feature type="domain" description="C2 5" evidence="4">
    <location>
        <begin position="1124"/>
        <end position="1250"/>
    </location>
</feature>
<feature type="domain" description="C2 6" evidence="4">
    <location>
        <begin position="1470"/>
        <end position="1588"/>
    </location>
</feature>
<feature type="domain" description="C2 7" evidence="4">
    <location>
        <begin position="1711"/>
        <end position="1860"/>
    </location>
</feature>
<feature type="region of interest" description="Disordered" evidence="5">
    <location>
        <begin position="655"/>
        <end position="699"/>
    </location>
</feature>
<feature type="region of interest" description="Disordered" evidence="5">
    <location>
        <begin position="1288"/>
        <end position="1311"/>
    </location>
</feature>
<feature type="region of interest" description="Disordered" evidence="5">
    <location>
        <begin position="1354"/>
        <end position="1399"/>
    </location>
</feature>
<feature type="coiled-coil region" evidence="3">
    <location>
        <begin position="1282"/>
        <end position="1363"/>
    </location>
</feature>
<feature type="compositionally biased region" description="Basic and acidic residues" evidence="5">
    <location>
        <begin position="1356"/>
        <end position="1399"/>
    </location>
</feature>
<feature type="binding site" evidence="4">
    <location>
        <position position="984"/>
    </location>
    <ligand>
        <name>Ca(2+)</name>
        <dbReference type="ChEBI" id="CHEBI:29108"/>
        <label>1</label>
    </ligand>
</feature>
<feature type="binding site" evidence="4">
    <location>
        <position position="990"/>
    </location>
    <ligand>
        <name>Ca(2+)</name>
        <dbReference type="ChEBI" id="CHEBI:29108"/>
        <label>1</label>
    </ligand>
</feature>
<feature type="binding site" evidence="4">
    <location>
        <position position="1046"/>
    </location>
    <ligand>
        <name>Ca(2+)</name>
        <dbReference type="ChEBI" id="CHEBI:29108"/>
        <label>1</label>
    </ligand>
</feature>
<feature type="binding site" evidence="4">
    <location>
        <position position="1048"/>
    </location>
    <ligand>
        <name>Ca(2+)</name>
        <dbReference type="ChEBI" id="CHEBI:29108"/>
        <label>1</label>
    </ligand>
</feature>
<feature type="binding site" evidence="4">
    <location>
        <position position="1503"/>
    </location>
    <ligand>
        <name>Ca(2+)</name>
        <dbReference type="ChEBI" id="CHEBI:29108"/>
        <label>2</label>
    </ligand>
</feature>
<feature type="binding site" evidence="4">
    <location>
        <position position="1503"/>
    </location>
    <ligand>
        <name>Ca(2+)</name>
        <dbReference type="ChEBI" id="CHEBI:29108"/>
        <label>3</label>
    </ligand>
</feature>
<feature type="binding site" evidence="4">
    <location>
        <position position="1509"/>
    </location>
    <ligand>
        <name>Ca(2+)</name>
        <dbReference type="ChEBI" id="CHEBI:29108"/>
        <label>2</label>
    </ligand>
</feature>
<feature type="binding site" evidence="4">
    <location>
        <position position="1558"/>
    </location>
    <ligand>
        <name>Ca(2+)</name>
        <dbReference type="ChEBI" id="CHEBI:29108"/>
        <label>2</label>
    </ligand>
</feature>
<feature type="binding site" evidence="4">
    <location>
        <position position="1558"/>
    </location>
    <ligand>
        <name>Ca(2+)</name>
        <dbReference type="ChEBI" id="CHEBI:29108"/>
        <label>3</label>
    </ligand>
</feature>
<feature type="binding site" evidence="4">
    <location>
        <position position="1560"/>
    </location>
    <ligand>
        <name>Ca(2+)</name>
        <dbReference type="ChEBI" id="CHEBI:29108"/>
        <label>2</label>
    </ligand>
</feature>
<feature type="binding site" evidence="4">
    <location>
        <position position="1560"/>
    </location>
    <ligand>
        <name>Ca(2+)</name>
        <dbReference type="ChEBI" id="CHEBI:29108"/>
        <label>3</label>
    </ligand>
</feature>
<feature type="binding site" evidence="4">
    <location>
        <position position="1566"/>
    </location>
    <ligand>
        <name>Ca(2+)</name>
        <dbReference type="ChEBI" id="CHEBI:29108"/>
        <label>3</label>
    </ligand>
</feature>
<feature type="binding site" evidence="4">
    <location>
        <position position="1831"/>
    </location>
    <ligand>
        <name>Ca(2+)</name>
        <dbReference type="ChEBI" id="CHEBI:29108"/>
        <label>4</label>
    </ligand>
</feature>
<feature type="binding site" evidence="4">
    <location>
        <position position="1834"/>
    </location>
    <ligand>
        <name>Ca(2+)</name>
        <dbReference type="ChEBI" id="CHEBI:29108"/>
        <label>4</label>
    </ligand>
</feature>
<feature type="binding site" evidence="4">
    <location>
        <position position="1837"/>
    </location>
    <ligand>
        <name>Ca(2+)</name>
        <dbReference type="ChEBI" id="CHEBI:29108"/>
        <label>4</label>
    </ligand>
</feature>
<gene>
    <name type="primary">otof</name>
    <name type="synonym">fer1l2</name>
    <name type="ORF">si:dkey-181f18.3</name>
</gene>
<evidence type="ECO:0000250" key="1">
    <source>
        <dbReference type="UniProtKB" id="Q9ERC5"/>
    </source>
</evidence>
<evidence type="ECO:0000250" key="2">
    <source>
        <dbReference type="UniProtKB" id="Q9ESF1"/>
    </source>
</evidence>
<evidence type="ECO:0000255" key="3"/>
<evidence type="ECO:0000255" key="4">
    <source>
        <dbReference type="PROSITE-ProRule" id="PRU00041"/>
    </source>
</evidence>
<evidence type="ECO:0000256" key="5">
    <source>
        <dbReference type="SAM" id="MobiDB-lite"/>
    </source>
</evidence>
<evidence type="ECO:0000305" key="6"/>
<reference key="1">
    <citation type="journal article" date="2013" name="Nature">
        <title>The zebrafish reference genome sequence and its relationship to the human genome.</title>
        <authorList>
            <person name="Howe K."/>
            <person name="Clark M.D."/>
            <person name="Torroja C.F."/>
            <person name="Torrance J."/>
            <person name="Berthelot C."/>
            <person name="Muffato M."/>
            <person name="Collins J.E."/>
            <person name="Humphray S."/>
            <person name="McLaren K."/>
            <person name="Matthews L."/>
            <person name="McLaren S."/>
            <person name="Sealy I."/>
            <person name="Caccamo M."/>
            <person name="Churcher C."/>
            <person name="Scott C."/>
            <person name="Barrett J.C."/>
            <person name="Koch R."/>
            <person name="Rauch G.J."/>
            <person name="White S."/>
            <person name="Chow W."/>
            <person name="Kilian B."/>
            <person name="Quintais L.T."/>
            <person name="Guerra-Assuncao J.A."/>
            <person name="Zhou Y."/>
            <person name="Gu Y."/>
            <person name="Yen J."/>
            <person name="Vogel J.H."/>
            <person name="Eyre T."/>
            <person name="Redmond S."/>
            <person name="Banerjee R."/>
            <person name="Chi J."/>
            <person name="Fu B."/>
            <person name="Langley E."/>
            <person name="Maguire S.F."/>
            <person name="Laird G.K."/>
            <person name="Lloyd D."/>
            <person name="Kenyon E."/>
            <person name="Donaldson S."/>
            <person name="Sehra H."/>
            <person name="Almeida-King J."/>
            <person name="Loveland J."/>
            <person name="Trevanion S."/>
            <person name="Jones M."/>
            <person name="Quail M."/>
            <person name="Willey D."/>
            <person name="Hunt A."/>
            <person name="Burton J."/>
            <person name="Sims S."/>
            <person name="McLay K."/>
            <person name="Plumb B."/>
            <person name="Davis J."/>
            <person name="Clee C."/>
            <person name="Oliver K."/>
            <person name="Clark R."/>
            <person name="Riddle C."/>
            <person name="Elliot D."/>
            <person name="Threadgold G."/>
            <person name="Harden G."/>
            <person name="Ware D."/>
            <person name="Begum S."/>
            <person name="Mortimore B."/>
            <person name="Kerry G."/>
            <person name="Heath P."/>
            <person name="Phillimore B."/>
            <person name="Tracey A."/>
            <person name="Corby N."/>
            <person name="Dunn M."/>
            <person name="Johnson C."/>
            <person name="Wood J."/>
            <person name="Clark S."/>
            <person name="Pelan S."/>
            <person name="Griffiths G."/>
            <person name="Smith M."/>
            <person name="Glithero R."/>
            <person name="Howden P."/>
            <person name="Barker N."/>
            <person name="Lloyd C."/>
            <person name="Stevens C."/>
            <person name="Harley J."/>
            <person name="Holt K."/>
            <person name="Panagiotidis G."/>
            <person name="Lovell J."/>
            <person name="Beasley H."/>
            <person name="Henderson C."/>
            <person name="Gordon D."/>
            <person name="Auger K."/>
            <person name="Wright D."/>
            <person name="Collins J."/>
            <person name="Raisen C."/>
            <person name="Dyer L."/>
            <person name="Leung K."/>
            <person name="Robertson L."/>
            <person name="Ambridge K."/>
            <person name="Leongamornlert D."/>
            <person name="McGuire S."/>
            <person name="Gilderthorp R."/>
            <person name="Griffiths C."/>
            <person name="Manthravadi D."/>
            <person name="Nichol S."/>
            <person name="Barker G."/>
            <person name="Whitehead S."/>
            <person name="Kay M."/>
            <person name="Brown J."/>
            <person name="Murnane C."/>
            <person name="Gray E."/>
            <person name="Humphries M."/>
            <person name="Sycamore N."/>
            <person name="Barker D."/>
            <person name="Saunders D."/>
            <person name="Wallis J."/>
            <person name="Babbage A."/>
            <person name="Hammond S."/>
            <person name="Mashreghi-Mohammadi M."/>
            <person name="Barr L."/>
            <person name="Martin S."/>
            <person name="Wray P."/>
            <person name="Ellington A."/>
            <person name="Matthews N."/>
            <person name="Ellwood M."/>
            <person name="Woodmansey R."/>
            <person name="Clark G."/>
            <person name="Cooper J."/>
            <person name="Tromans A."/>
            <person name="Grafham D."/>
            <person name="Skuce C."/>
            <person name="Pandian R."/>
            <person name="Andrews R."/>
            <person name="Harrison E."/>
            <person name="Kimberley A."/>
            <person name="Garnett J."/>
            <person name="Fosker N."/>
            <person name="Hall R."/>
            <person name="Garner P."/>
            <person name="Kelly D."/>
            <person name="Bird C."/>
            <person name="Palmer S."/>
            <person name="Gehring I."/>
            <person name="Berger A."/>
            <person name="Dooley C.M."/>
            <person name="Ersan-Urun Z."/>
            <person name="Eser C."/>
            <person name="Geiger H."/>
            <person name="Geisler M."/>
            <person name="Karotki L."/>
            <person name="Kirn A."/>
            <person name="Konantz J."/>
            <person name="Konantz M."/>
            <person name="Oberlander M."/>
            <person name="Rudolph-Geiger S."/>
            <person name="Teucke M."/>
            <person name="Lanz C."/>
            <person name="Raddatz G."/>
            <person name="Osoegawa K."/>
            <person name="Zhu B."/>
            <person name="Rapp A."/>
            <person name="Widaa S."/>
            <person name="Langford C."/>
            <person name="Yang F."/>
            <person name="Schuster S.C."/>
            <person name="Carter N.P."/>
            <person name="Harrow J."/>
            <person name="Ning Z."/>
            <person name="Herrero J."/>
            <person name="Searle S.M."/>
            <person name="Enright A."/>
            <person name="Geisler R."/>
            <person name="Plasterk R.H."/>
            <person name="Lee C."/>
            <person name="Westerfield M."/>
            <person name="de Jong P.J."/>
            <person name="Zon L.I."/>
            <person name="Postlethwait J.H."/>
            <person name="Nusslein-Volhard C."/>
            <person name="Hubbard T.J."/>
            <person name="Roest Crollius H."/>
            <person name="Rogers J."/>
            <person name="Stemple D.L."/>
        </authorList>
    </citation>
    <scope>NUCLEOTIDE SEQUENCE [LARGE SCALE GENOMIC DNA]</scope>
    <source>
        <strain>Tuebingen</strain>
    </source>
</reference>